<sequence length="382" mass="43304">MSNATNNTLGSLLPQLEAAANSNSLYGGMVPNLRFNITMIVIWGILLTIHVVQLLMRQYWFSIAFICTGILEVLGFIGRTWSHSNVADMDAFLLNMICLTIAPVFTMGGIYYQLAKLIEVYGHRFSLLPSPMAYSFIFICSDIVSLVVQAVGGGLCGVAVTDGTSTTTGNHVFIAGLAIQVASMAIFLMLWFHFLFRIYISVRWEHINSRPISLSLLKISQTEVDYLYREKFHFLRLEPKRWVFHYFNLAMTVAVLTIFTRCCYRLAELVVGWDGYLITHEWYFIILDALMMAIATVTLTIFHPGFAFKGRSTSIPITPRHVDPETLPHTDDVEDILDTSDSKQFDIEKEEFQASMKYPISTFKQFMSKIANLFSSKKKAKL</sequence>
<protein>
    <recommendedName>
        <fullName>Sphingoid long-chain base transporter RSB1</fullName>
    </recommendedName>
</protein>
<feature type="chain" id="PRO_0000393317" description="Sphingoid long-chain base transporter RSB1" evidence="1">
    <location>
        <begin position="1"/>
        <end position="382"/>
    </location>
</feature>
<feature type="topological domain" description="Extracellular" evidence="1">
    <location>
        <begin position="1"/>
        <end position="34"/>
    </location>
</feature>
<feature type="transmembrane region" description="Helical" evidence="2">
    <location>
        <begin position="35"/>
        <end position="55"/>
    </location>
</feature>
<feature type="topological domain" description="Cytoplasmic" evidence="1">
    <location>
        <begin position="56"/>
        <end position="57"/>
    </location>
</feature>
<feature type="transmembrane region" description="Helical" evidence="2">
    <location>
        <begin position="58"/>
        <end position="78"/>
    </location>
</feature>
<feature type="topological domain" description="Extracellular" evidence="1">
    <location>
        <begin position="79"/>
        <end position="90"/>
    </location>
</feature>
<feature type="transmembrane region" description="Helical" evidence="2">
    <location>
        <begin position="91"/>
        <end position="111"/>
    </location>
</feature>
<feature type="topological domain" description="Cytoplasmic" evidence="1">
    <location>
        <begin position="112"/>
        <end position="135"/>
    </location>
</feature>
<feature type="transmembrane region" description="Helical" evidence="2">
    <location>
        <begin position="136"/>
        <end position="156"/>
    </location>
</feature>
<feature type="topological domain" description="Extracellular" evidence="1">
    <location>
        <begin position="157"/>
        <end position="171"/>
    </location>
</feature>
<feature type="transmembrane region" description="Helical" evidence="2">
    <location>
        <begin position="172"/>
        <end position="192"/>
    </location>
</feature>
<feature type="topological domain" description="Cytoplasmic" evidence="1">
    <location>
        <begin position="193"/>
        <end position="241"/>
    </location>
</feature>
<feature type="transmembrane region" description="Helical" evidence="2">
    <location>
        <begin position="242"/>
        <end position="262"/>
    </location>
</feature>
<feature type="topological domain" description="Extracellular" evidence="1">
    <location>
        <begin position="263"/>
        <end position="281"/>
    </location>
</feature>
<feature type="transmembrane region" description="Helical" evidence="2">
    <location>
        <begin position="282"/>
        <end position="302"/>
    </location>
</feature>
<feature type="topological domain" description="Cytoplasmic" evidence="1">
    <location>
        <begin position="303"/>
        <end position="382"/>
    </location>
</feature>
<feature type="glycosylation site" description="N-linked (GlcNAc...) asparagine" evidence="2">
    <location>
        <position position="3"/>
    </location>
</feature>
<feature type="glycosylation site" description="N-linked (GlcNAc...) asparagine" evidence="2">
    <location>
        <position position="6"/>
    </location>
</feature>
<proteinExistence type="inferred from homology"/>
<accession>A6ZNQ4</accession>
<gene>
    <name type="primary">RSB1</name>
    <name type="ORF">SCY_5122</name>
</gene>
<name>RSB1_YEAS7</name>
<organism>
    <name type="scientific">Saccharomyces cerevisiae (strain YJM789)</name>
    <name type="common">Baker's yeast</name>
    <dbReference type="NCBI Taxonomy" id="307796"/>
    <lineage>
        <taxon>Eukaryota</taxon>
        <taxon>Fungi</taxon>
        <taxon>Dikarya</taxon>
        <taxon>Ascomycota</taxon>
        <taxon>Saccharomycotina</taxon>
        <taxon>Saccharomycetes</taxon>
        <taxon>Saccharomycetales</taxon>
        <taxon>Saccharomycetaceae</taxon>
        <taxon>Saccharomyces</taxon>
    </lineage>
</organism>
<comment type="function">
    <text evidence="1">Catalyzes the ATP-dependent translocation of sphingoid long-chain bases (LCBs) from the cytoplasmic site toward the extracytoplasmic side of the membrane (flip-flop). Involved in the establishment of the functional lipid asymmetry of the plasma membrane. Regulates intracellular levels of LCBs, sphingolipid precursors that are growth inhibitory at increased levels (By similarity).</text>
</comment>
<comment type="subcellular location">
    <subcellularLocation>
        <location evidence="1">Cell membrane</location>
        <topology>Multi-pass membrane protein</topology>
    </subcellularLocation>
</comment>
<comment type="induction">
    <text evidence="1">In response to loss of mitochondrial DNA in a transcription factor PDR3-dependent manner. Induced in response to altered glycerophospholipid asymmetry of the plasma membrane in a transcription factor PDR1-dependent manner (By similarity).</text>
</comment>
<comment type="similarity">
    <text evidence="3">Belongs to the lipid-translocating exporter (LTE) (TC 9.A.26.1) family.</text>
</comment>
<comment type="sequence caution" evidence="3">
    <conflict type="erroneous initiation">
        <sequence resource="EMBL-CDS" id="EDN63919"/>
    </conflict>
</comment>
<reference key="1">
    <citation type="journal article" date="2007" name="Proc. Natl. Acad. Sci. U.S.A.">
        <title>Genome sequencing and comparative analysis of Saccharomyces cerevisiae strain YJM789.</title>
        <authorList>
            <person name="Wei W."/>
            <person name="McCusker J.H."/>
            <person name="Hyman R.W."/>
            <person name="Jones T."/>
            <person name="Ning Y."/>
            <person name="Cao Z."/>
            <person name="Gu Z."/>
            <person name="Bruno D."/>
            <person name="Miranda M."/>
            <person name="Nguyen M."/>
            <person name="Wilhelmy J."/>
            <person name="Komp C."/>
            <person name="Tamse R."/>
            <person name="Wang X."/>
            <person name="Jia P."/>
            <person name="Luedi P."/>
            <person name="Oefner P.J."/>
            <person name="David L."/>
            <person name="Dietrich F.S."/>
            <person name="Li Y."/>
            <person name="Davis R.W."/>
            <person name="Steinmetz L.M."/>
        </authorList>
    </citation>
    <scope>NUCLEOTIDE SEQUENCE [LARGE SCALE GENOMIC DNA]</scope>
    <source>
        <strain>YJM789</strain>
    </source>
</reference>
<keyword id="KW-1003">Cell membrane</keyword>
<keyword id="KW-0325">Glycoprotein</keyword>
<keyword id="KW-0445">Lipid transport</keyword>
<keyword id="KW-0472">Membrane</keyword>
<keyword id="KW-0812">Transmembrane</keyword>
<keyword id="KW-1133">Transmembrane helix</keyword>
<keyword id="KW-0813">Transport</keyword>
<dbReference type="EMBL" id="AAFW02000030">
    <property type="protein sequence ID" value="EDN63919.1"/>
    <property type="status" value="ALT_INIT"/>
    <property type="molecule type" value="Genomic_DNA"/>
</dbReference>
<dbReference type="GlyCosmos" id="A6ZNQ4">
    <property type="glycosylation" value="2 sites, No reported glycans"/>
</dbReference>
<dbReference type="HOGENOM" id="CLU_033465_6_3_1"/>
<dbReference type="OrthoDB" id="37671at4893"/>
<dbReference type="Proteomes" id="UP000007060">
    <property type="component" value="Unassembled WGS sequence"/>
</dbReference>
<dbReference type="GO" id="GO:0000324">
    <property type="term" value="C:fungal-type vacuole"/>
    <property type="evidence" value="ECO:0007669"/>
    <property type="project" value="TreeGrafter"/>
</dbReference>
<dbReference type="GO" id="GO:0005886">
    <property type="term" value="C:plasma membrane"/>
    <property type="evidence" value="ECO:0007669"/>
    <property type="project" value="UniProtKB-SubCell"/>
</dbReference>
<dbReference type="GO" id="GO:0006869">
    <property type="term" value="P:lipid transport"/>
    <property type="evidence" value="ECO:0007669"/>
    <property type="project" value="UniProtKB-KW"/>
</dbReference>
<dbReference type="InterPro" id="IPR007568">
    <property type="entry name" value="RTA1"/>
</dbReference>
<dbReference type="PANTHER" id="PTHR31465">
    <property type="entry name" value="PROTEIN RTA1-RELATED"/>
    <property type="match status" value="1"/>
</dbReference>
<dbReference type="PANTHER" id="PTHR31465:SF9">
    <property type="entry name" value="SPHINGOID LONG-CHAIN BASE TRANSPORTER RSB1"/>
    <property type="match status" value="1"/>
</dbReference>
<dbReference type="Pfam" id="PF04479">
    <property type="entry name" value="RTA1"/>
    <property type="match status" value="1"/>
</dbReference>
<evidence type="ECO:0000250" key="1"/>
<evidence type="ECO:0000255" key="2"/>
<evidence type="ECO:0000305" key="3"/>